<feature type="chain" id="PRO_0000405086" description="Nuclear distribution protein PAC1">
    <location>
        <begin position="1"/>
        <end position="478"/>
    </location>
</feature>
<feature type="domain" description="LisH" evidence="1">
    <location>
        <begin position="9"/>
        <end position="41"/>
    </location>
</feature>
<feature type="repeat" description="WD 1">
    <location>
        <begin position="113"/>
        <end position="154"/>
    </location>
</feature>
<feature type="repeat" description="WD 2">
    <location>
        <begin position="156"/>
        <end position="196"/>
    </location>
</feature>
<feature type="repeat" description="WD 3">
    <location>
        <begin position="200"/>
        <end position="247"/>
    </location>
</feature>
<feature type="repeat" description="WD 4">
    <location>
        <begin position="250"/>
        <end position="289"/>
    </location>
</feature>
<feature type="repeat" description="WD 5">
    <location>
        <begin position="292"/>
        <end position="352"/>
    </location>
</feature>
<feature type="repeat" description="WD 6">
    <location>
        <begin position="354"/>
        <end position="393"/>
    </location>
</feature>
<feature type="repeat" description="WD 7">
    <location>
        <begin position="398"/>
        <end position="439"/>
    </location>
</feature>
<feature type="repeat" description="WD 8">
    <location>
        <begin position="440"/>
        <end position="477"/>
    </location>
</feature>
<feature type="coiled-coil region" evidence="1">
    <location>
        <begin position="60"/>
        <end position="87"/>
    </location>
</feature>
<proteinExistence type="inferred from homology"/>
<name>LIS1_PARBP</name>
<organism>
    <name type="scientific">Paracoccidioides brasiliensis (strain Pb03)</name>
    <dbReference type="NCBI Taxonomy" id="482561"/>
    <lineage>
        <taxon>Eukaryota</taxon>
        <taxon>Fungi</taxon>
        <taxon>Dikarya</taxon>
        <taxon>Ascomycota</taxon>
        <taxon>Pezizomycotina</taxon>
        <taxon>Eurotiomycetes</taxon>
        <taxon>Eurotiomycetidae</taxon>
        <taxon>Onygenales</taxon>
        <taxon>Ajellomycetaceae</taxon>
        <taxon>Paracoccidioides</taxon>
    </lineage>
</organism>
<protein>
    <recommendedName>
        <fullName evidence="1">Nuclear distribution protein PAC1</fullName>
    </recommendedName>
    <alternativeName>
        <fullName evidence="1">Lissencephaly-1 homolog</fullName>
        <shortName evidence="1">LIS-1</shortName>
    </alternativeName>
    <alternativeName>
        <fullName evidence="1">nudF homolog</fullName>
    </alternativeName>
</protein>
<sequence length="478" mass="51534">MSQLLTARQAEELHKAMIAYLLSANLPKSAAALREELADSVQLDDSTAKKYEGLLEKKWTSVVRLQKKIMDLESRNNALQSELDSATPTSLARRNQDPVSWLPHAPARHILQSHREPVTCVGFHPVFSSLASGSDDTTIKIWDWELGELERTIKGHTKAVLDVDYGGPRGGTLLASCSSDLTIKLWDPSDGYKNIRTLPGHDHSVSAVRFIPSGAAGSPLSGNLLVSASRDKTLRIWDVTTGYCVKTLRGHVDWVRDVVASPDGRFLFSAGNDQVARLWDVSSGETKSTFLGHEHAVECVAFAPPTSYPHLAALAGLKKAPPSSSSAEYVATGSRDKSIRIWDARGTLIKTLIGHDNWVRALAFHPGGKYLLSVSDDKTLRCWDLTQECKCVRTVKDAHGHFISCIRWAPNIIKDAGVVNGDDTSTAASANGGALGASAINGVVPTGKKEDPGGGPMMGIRCVIATGSVDLKVRVFAS</sequence>
<evidence type="ECO:0000255" key="1">
    <source>
        <dbReference type="HAMAP-Rule" id="MF_03141"/>
    </source>
</evidence>
<gene>
    <name evidence="1" type="primary">PAC1</name>
    <name evidence="1" type="synonym">LIS1</name>
    <name type="ORF">PABG_04454</name>
</gene>
<accession>C0S902</accession>
<keyword id="KW-0131">Cell cycle</keyword>
<keyword id="KW-0132">Cell division</keyword>
<keyword id="KW-0175">Coiled coil</keyword>
<keyword id="KW-0963">Cytoplasm</keyword>
<keyword id="KW-0206">Cytoskeleton</keyword>
<keyword id="KW-0493">Microtubule</keyword>
<keyword id="KW-0498">Mitosis</keyword>
<keyword id="KW-0677">Repeat</keyword>
<keyword id="KW-0813">Transport</keyword>
<keyword id="KW-0853">WD repeat</keyword>
<reference key="1">
    <citation type="journal article" date="2011" name="PLoS Genet.">
        <title>Comparative genomic analysis of human fungal pathogens causing paracoccidioidomycosis.</title>
        <authorList>
            <person name="Desjardins C.A."/>
            <person name="Champion M.D."/>
            <person name="Holder J.W."/>
            <person name="Muszewska A."/>
            <person name="Goldberg J."/>
            <person name="Bailao A.M."/>
            <person name="Brigido M.M."/>
            <person name="Ferreira M.E."/>
            <person name="Garcia A.M."/>
            <person name="Grynberg M."/>
            <person name="Gujja S."/>
            <person name="Heiman D.I."/>
            <person name="Henn M.R."/>
            <person name="Kodira C.D."/>
            <person name="Leon-Narvaez H."/>
            <person name="Longo L.V.G."/>
            <person name="Ma L.-J."/>
            <person name="Malavazi I."/>
            <person name="Matsuo A.L."/>
            <person name="Morais F.V."/>
            <person name="Pereira M."/>
            <person name="Rodriguez-Brito S."/>
            <person name="Sakthikumar S."/>
            <person name="Salem-Izacc S.M."/>
            <person name="Sykes S.M."/>
            <person name="Teixeira M.M."/>
            <person name="Vallejo M.C."/>
            <person name="Walter M.E."/>
            <person name="Yandava C."/>
            <person name="Young S."/>
            <person name="Zeng Q."/>
            <person name="Zucker J."/>
            <person name="Felipe M.S."/>
            <person name="Goldman G.H."/>
            <person name="Haas B.J."/>
            <person name="McEwen J.G."/>
            <person name="Nino-Vega G."/>
            <person name="Puccia R."/>
            <person name="San-Blas G."/>
            <person name="Soares C.M."/>
            <person name="Birren B.W."/>
            <person name="Cuomo C.A."/>
        </authorList>
    </citation>
    <scope>NUCLEOTIDE SEQUENCE [LARGE SCALE GENOMIC DNA]</scope>
    <source>
        <strain>Pb03</strain>
    </source>
</reference>
<dbReference type="EMBL" id="KN305536">
    <property type="protein sequence ID" value="EEH22243.2"/>
    <property type="molecule type" value="Genomic_DNA"/>
</dbReference>
<dbReference type="SMR" id="C0S902"/>
<dbReference type="VEuPathDB" id="FungiDB:PABG_04454"/>
<dbReference type="HOGENOM" id="CLU_000288_57_15_1"/>
<dbReference type="OrthoDB" id="24525at33183"/>
<dbReference type="GO" id="GO:0005737">
    <property type="term" value="C:cytoplasm"/>
    <property type="evidence" value="ECO:0007669"/>
    <property type="project" value="UniProtKB-UniRule"/>
</dbReference>
<dbReference type="GO" id="GO:0005874">
    <property type="term" value="C:microtubule"/>
    <property type="evidence" value="ECO:0007669"/>
    <property type="project" value="UniProtKB-KW"/>
</dbReference>
<dbReference type="GO" id="GO:0005875">
    <property type="term" value="C:microtubule associated complex"/>
    <property type="evidence" value="ECO:0007669"/>
    <property type="project" value="UniProtKB-UniRule"/>
</dbReference>
<dbReference type="GO" id="GO:0000922">
    <property type="term" value="C:spindle pole"/>
    <property type="evidence" value="ECO:0007669"/>
    <property type="project" value="UniProtKB-SubCell"/>
</dbReference>
<dbReference type="GO" id="GO:1990234">
    <property type="term" value="C:transferase complex"/>
    <property type="evidence" value="ECO:0007669"/>
    <property type="project" value="UniProtKB-ARBA"/>
</dbReference>
<dbReference type="GO" id="GO:0070840">
    <property type="term" value="F:dynein complex binding"/>
    <property type="evidence" value="ECO:0007669"/>
    <property type="project" value="UniProtKB-UniRule"/>
</dbReference>
<dbReference type="GO" id="GO:0051301">
    <property type="term" value="P:cell division"/>
    <property type="evidence" value="ECO:0007669"/>
    <property type="project" value="UniProtKB-KW"/>
</dbReference>
<dbReference type="GO" id="GO:0000132">
    <property type="term" value="P:establishment of mitotic spindle orientation"/>
    <property type="evidence" value="ECO:0007669"/>
    <property type="project" value="UniProtKB-UniRule"/>
</dbReference>
<dbReference type="GO" id="GO:0051012">
    <property type="term" value="P:microtubule sliding"/>
    <property type="evidence" value="ECO:0007669"/>
    <property type="project" value="UniProtKB-UniRule"/>
</dbReference>
<dbReference type="CDD" id="cd00200">
    <property type="entry name" value="WD40"/>
    <property type="match status" value="1"/>
</dbReference>
<dbReference type="FunFam" id="1.20.960.30:FF:000002">
    <property type="entry name" value="Platelet-activating factor acetylhydrolase ib"/>
    <property type="match status" value="1"/>
</dbReference>
<dbReference type="Gene3D" id="1.20.960.30">
    <property type="match status" value="1"/>
</dbReference>
<dbReference type="Gene3D" id="2.130.10.10">
    <property type="entry name" value="YVTN repeat-like/Quinoprotein amine dehydrogenase"/>
    <property type="match status" value="1"/>
</dbReference>
<dbReference type="HAMAP" id="MF_03141">
    <property type="entry name" value="lis1"/>
    <property type="match status" value="1"/>
</dbReference>
<dbReference type="InterPro" id="IPR017252">
    <property type="entry name" value="Dynein_regulator_LIS1"/>
</dbReference>
<dbReference type="InterPro" id="IPR020472">
    <property type="entry name" value="G-protein_beta_WD-40_rep"/>
</dbReference>
<dbReference type="InterPro" id="IPR037190">
    <property type="entry name" value="LIS1_N"/>
</dbReference>
<dbReference type="InterPro" id="IPR006594">
    <property type="entry name" value="LisH"/>
</dbReference>
<dbReference type="InterPro" id="IPR056795">
    <property type="entry name" value="PAC1-like_LisH-like_dom"/>
</dbReference>
<dbReference type="InterPro" id="IPR015943">
    <property type="entry name" value="WD40/YVTN_repeat-like_dom_sf"/>
</dbReference>
<dbReference type="InterPro" id="IPR019775">
    <property type="entry name" value="WD40_repeat_CS"/>
</dbReference>
<dbReference type="InterPro" id="IPR036322">
    <property type="entry name" value="WD40_repeat_dom_sf"/>
</dbReference>
<dbReference type="InterPro" id="IPR001680">
    <property type="entry name" value="WD40_rpt"/>
</dbReference>
<dbReference type="PANTHER" id="PTHR22847:SF637">
    <property type="entry name" value="WD REPEAT DOMAIN 5B"/>
    <property type="match status" value="1"/>
</dbReference>
<dbReference type="PANTHER" id="PTHR22847">
    <property type="entry name" value="WD40 REPEAT PROTEIN"/>
    <property type="match status" value="1"/>
</dbReference>
<dbReference type="Pfam" id="PF24951">
    <property type="entry name" value="LisH_PAC1"/>
    <property type="match status" value="1"/>
</dbReference>
<dbReference type="Pfam" id="PF00400">
    <property type="entry name" value="WD40"/>
    <property type="match status" value="6"/>
</dbReference>
<dbReference type="PIRSF" id="PIRSF037647">
    <property type="entry name" value="Dynein_regulator_Lis1"/>
    <property type="match status" value="1"/>
</dbReference>
<dbReference type="PRINTS" id="PR00320">
    <property type="entry name" value="GPROTEINBRPT"/>
</dbReference>
<dbReference type="SMART" id="SM00320">
    <property type="entry name" value="WD40"/>
    <property type="match status" value="7"/>
</dbReference>
<dbReference type="SUPFAM" id="SSF109925">
    <property type="entry name" value="Lissencephaly-1 protein (Lis-1, PAF-AH alpha) N-terminal domain"/>
    <property type="match status" value="1"/>
</dbReference>
<dbReference type="SUPFAM" id="SSF50978">
    <property type="entry name" value="WD40 repeat-like"/>
    <property type="match status" value="1"/>
</dbReference>
<dbReference type="PROSITE" id="PS50896">
    <property type="entry name" value="LISH"/>
    <property type="match status" value="1"/>
</dbReference>
<dbReference type="PROSITE" id="PS00678">
    <property type="entry name" value="WD_REPEATS_1"/>
    <property type="match status" value="3"/>
</dbReference>
<dbReference type="PROSITE" id="PS50082">
    <property type="entry name" value="WD_REPEATS_2"/>
    <property type="match status" value="6"/>
</dbReference>
<dbReference type="PROSITE" id="PS50294">
    <property type="entry name" value="WD_REPEATS_REGION"/>
    <property type="match status" value="1"/>
</dbReference>
<comment type="function">
    <text evidence="1">Positively regulates the activity of the minus-end directed microtubule motor protein dynein. May enhance dynein-mediated microtubule sliding by targeting dynein to the microtubule plus end. Required for nuclear migration during vegetative growth as well as development. Required for retrograde early endosome (EE) transport from the hyphal tip. Required for localization of dynein to the mitotic spindle poles. Recruits additional proteins to the dynein complex at SPBs.</text>
</comment>
<comment type="subunit">
    <text evidence="1">Self-associates. Interacts with NDL1 and dynein.</text>
</comment>
<comment type="subcellular location">
    <subcellularLocation>
        <location evidence="1">Cytoplasm</location>
        <location evidence="1">Cytoskeleton</location>
    </subcellularLocation>
    <subcellularLocation>
        <location evidence="1">Cytoplasm</location>
        <location evidence="1">Cytoskeleton</location>
        <location evidence="1">Spindle pole</location>
    </subcellularLocation>
    <text evidence="1">Localizes to the plus ends of microtubules at the hyphal tip and the mitotic spindle poles.</text>
</comment>
<comment type="domain">
    <text evidence="1">Dimerization mediated by the LisH domain may be required to activate dynein.</text>
</comment>
<comment type="similarity">
    <text evidence="1">Belongs to the WD repeat LIS1/nudF family.</text>
</comment>